<proteinExistence type="evidence at protein level"/>
<sequence>MKRLPLLVVFSTLLNCSYTQNCTKTPCLPNAKCEIRNGIEACYCNMGFSGNGVTICEDDNECGNLTQSCGENANCTNTEGSYYCMCVPGFRSSSNQDRFITNDGTVCIENVNANCHLDNVCIAANINKTLTKIRSIKEPVALLQEVYRNSVTDLSPTDIITYIEILAESSSLLGYKNNTISAKDTLSNSTLTEFVKTVNNFVQRDTFVVWDKLSVNHRRTHLTKLMHTVEQATLRISQSFQKTTEFDTNSTDIALKVFFFDSYNMKHIHPHMNMDGDYINIFPKRKAAYDSNGNVAVAFVYYKSIGPLLSSSDNFLLKPQNYDNSEEEERVISSVISVSMSSNPPTLYELEKITFTLSHRKVTDRYRSLCAFWNYSPDTMNGSWSSEGCELTYSNETHTSCRCNHLTHFAILMSSGPSIGIKDYNILTRITQLGIIISLICLAICIFTFWFFSEIQSTRTTIHKNLCCSLFLAELVFLVGINTNTNKLFCSIIAGLLHYFFLAAFAWMCIEGIHLYLIVVGVIYNKGFLHKNFYIFGYLSPAVVVGFSAALGYRYYGTTKVCWLSTENNFIWSFIGPACLIILVNLLAFGVIIYKVFRHTAGLKPEVSCFENIRSCARGALALLFLLGTTWIFGVLHVVHASVVTAYLFTVSNAFQGMFIFLFLCVLSRKIQEEYYRLFKNVPCCFGCLR</sequence>
<comment type="function">
    <text evidence="9">Endothelial orphan receptor that acts as a key regulator of angiogenesis.</text>
</comment>
<comment type="subunit">
    <text evidence="1 9">Heterodimer of 2 chains generated by proteolytic processing; the large extracellular N-terminal fragment and the membrane-bound C-terminal fragment predominantly remain associated and non-covalently linked.</text>
</comment>
<comment type="subcellular location">
    <subcellularLocation>
        <location evidence="9">Cell membrane</location>
        <topology evidence="2">Multi-pass membrane protein</topology>
    </subcellularLocation>
</comment>
<comment type="tissue specificity">
    <text evidence="9">Detected in the majority of epithelial cells in tumor and normal tissues. Expressed also in human umbilical vein endothelial cells.</text>
</comment>
<comment type="developmental stage">
    <text evidence="5">Up-regulated in the adult heart.</text>
</comment>
<comment type="induction">
    <text evidence="9">Up-regulated in tumor endothelial cells. Up-regulated by DLL4.</text>
</comment>
<comment type="domain">
    <text evidence="1">The transmembrane domain is not required for cleavage, but it is required for dimer formation.</text>
</comment>
<comment type="PTM">
    <text evidence="9">Glycosylated.</text>
</comment>
<comment type="PTM">
    <text evidence="1">Proteolytically cleaved into 2 subunits, an extracellular alpha subunit and a seven-transmembrane subunit.</text>
</comment>
<comment type="similarity">
    <text evidence="12">Belongs to the G-protein coupled receptor 2 family. Adhesion G-protein coupled receptor (ADGR) subfamily.</text>
</comment>
<comment type="sequence caution" evidence="12">
    <conflict type="erroneous initiation">
        <sequence resource="EMBL-CDS" id="AAG33021"/>
    </conflict>
</comment>
<comment type="sequence caution" evidence="12">
    <conflict type="erroneous initiation">
        <sequence resource="EMBL-CDS" id="AAH25721"/>
    </conflict>
</comment>
<evidence type="ECO:0000250" key="1">
    <source>
        <dbReference type="UniProtKB" id="Q9ESC1"/>
    </source>
</evidence>
<evidence type="ECO:0000255" key="2"/>
<evidence type="ECO:0000255" key="3">
    <source>
        <dbReference type="PROSITE-ProRule" id="PRU00076"/>
    </source>
</evidence>
<evidence type="ECO:0000255" key="4">
    <source>
        <dbReference type="PROSITE-ProRule" id="PRU00098"/>
    </source>
</evidence>
<evidence type="ECO:0000269" key="5">
    <source>
    </source>
</evidence>
<evidence type="ECO:0000269" key="6">
    <source>
    </source>
</evidence>
<evidence type="ECO:0000269" key="7">
    <source>
    </source>
</evidence>
<evidence type="ECO:0000269" key="8">
    <source>
    </source>
</evidence>
<evidence type="ECO:0000269" key="9">
    <source>
    </source>
</evidence>
<evidence type="ECO:0000269" key="10">
    <source ref="1"/>
</evidence>
<evidence type="ECO:0000303" key="11">
    <source>
    </source>
</evidence>
<evidence type="ECO:0000305" key="12"/>
<name>AGRL4_HUMAN</name>
<reference key="1">
    <citation type="submission" date="1999-08" db="EMBL/GenBank/DDBJ databases">
        <title>Probable G-protein coupled receptor.</title>
        <authorList>
            <person name="Hirose M."/>
            <person name="Urakawa I."/>
            <person name="Yamano S."/>
            <person name="Okazaki H."/>
        </authorList>
    </citation>
    <scope>NUCLEOTIDE SEQUENCE [MRNA]</scope>
    <scope>VARIANT GLY-620</scope>
    <source>
        <tissue>Bone marrow</tissue>
    </source>
</reference>
<reference key="2">
    <citation type="journal article" date="2003" name="Genome Res.">
        <title>The secreted protein discovery initiative (SPDI), a large-scale effort to identify novel human secreted and transmembrane proteins: a bioinformatics assessment.</title>
        <authorList>
            <person name="Clark H.F."/>
            <person name="Gurney A.L."/>
            <person name="Abaya E."/>
            <person name="Baker K."/>
            <person name="Baldwin D.T."/>
            <person name="Brush J."/>
            <person name="Chen J."/>
            <person name="Chow B."/>
            <person name="Chui C."/>
            <person name="Crowley C."/>
            <person name="Currell B."/>
            <person name="Deuel B."/>
            <person name="Dowd P."/>
            <person name="Eaton D."/>
            <person name="Foster J.S."/>
            <person name="Grimaldi C."/>
            <person name="Gu Q."/>
            <person name="Hass P.E."/>
            <person name="Heldens S."/>
            <person name="Huang A."/>
            <person name="Kim H.S."/>
            <person name="Klimowski L."/>
            <person name="Jin Y."/>
            <person name="Johnson S."/>
            <person name="Lee J."/>
            <person name="Lewis L."/>
            <person name="Liao D."/>
            <person name="Mark M.R."/>
            <person name="Robbie E."/>
            <person name="Sanchez C."/>
            <person name="Schoenfeld J."/>
            <person name="Seshagiri S."/>
            <person name="Simmons L."/>
            <person name="Singh J."/>
            <person name="Smith V."/>
            <person name="Stinson J."/>
            <person name="Vagts A."/>
            <person name="Vandlen R.L."/>
            <person name="Watanabe C."/>
            <person name="Wieand D."/>
            <person name="Woods K."/>
            <person name="Xie M.-H."/>
            <person name="Yansura D.G."/>
            <person name="Yi S."/>
            <person name="Yu G."/>
            <person name="Yuan J."/>
            <person name="Zhang M."/>
            <person name="Zhang Z."/>
            <person name="Goddard A.D."/>
            <person name="Wood W.I."/>
            <person name="Godowski P.J."/>
            <person name="Gray A.M."/>
        </authorList>
    </citation>
    <scope>NUCLEOTIDE SEQUENCE [LARGE SCALE MRNA]</scope>
    <scope>VARIANT LEU-300</scope>
</reference>
<reference key="3">
    <citation type="journal article" date="2006" name="Nature">
        <title>The DNA sequence and biological annotation of human chromosome 1.</title>
        <authorList>
            <person name="Gregory S.G."/>
            <person name="Barlow K.F."/>
            <person name="McLay K.E."/>
            <person name="Kaul R."/>
            <person name="Swarbreck D."/>
            <person name="Dunham A."/>
            <person name="Scott C.E."/>
            <person name="Howe K.L."/>
            <person name="Woodfine K."/>
            <person name="Spencer C.C.A."/>
            <person name="Jones M.C."/>
            <person name="Gillson C."/>
            <person name="Searle S."/>
            <person name="Zhou Y."/>
            <person name="Kokocinski F."/>
            <person name="McDonald L."/>
            <person name="Evans R."/>
            <person name="Phillips K."/>
            <person name="Atkinson A."/>
            <person name="Cooper R."/>
            <person name="Jones C."/>
            <person name="Hall R.E."/>
            <person name="Andrews T.D."/>
            <person name="Lloyd C."/>
            <person name="Ainscough R."/>
            <person name="Almeida J.P."/>
            <person name="Ambrose K.D."/>
            <person name="Anderson F."/>
            <person name="Andrew R.W."/>
            <person name="Ashwell R.I.S."/>
            <person name="Aubin K."/>
            <person name="Babbage A.K."/>
            <person name="Bagguley C.L."/>
            <person name="Bailey J."/>
            <person name="Beasley H."/>
            <person name="Bethel G."/>
            <person name="Bird C.P."/>
            <person name="Bray-Allen S."/>
            <person name="Brown J.Y."/>
            <person name="Brown A.J."/>
            <person name="Buckley D."/>
            <person name="Burton J."/>
            <person name="Bye J."/>
            <person name="Carder C."/>
            <person name="Chapman J.C."/>
            <person name="Clark S.Y."/>
            <person name="Clarke G."/>
            <person name="Clee C."/>
            <person name="Cobley V."/>
            <person name="Collier R.E."/>
            <person name="Corby N."/>
            <person name="Coville G.J."/>
            <person name="Davies J."/>
            <person name="Deadman R."/>
            <person name="Dunn M."/>
            <person name="Earthrowl M."/>
            <person name="Ellington A.G."/>
            <person name="Errington H."/>
            <person name="Frankish A."/>
            <person name="Frankland J."/>
            <person name="French L."/>
            <person name="Garner P."/>
            <person name="Garnett J."/>
            <person name="Gay L."/>
            <person name="Ghori M.R.J."/>
            <person name="Gibson R."/>
            <person name="Gilby L.M."/>
            <person name="Gillett W."/>
            <person name="Glithero R.J."/>
            <person name="Grafham D.V."/>
            <person name="Griffiths C."/>
            <person name="Griffiths-Jones S."/>
            <person name="Grocock R."/>
            <person name="Hammond S."/>
            <person name="Harrison E.S.I."/>
            <person name="Hart E."/>
            <person name="Haugen E."/>
            <person name="Heath P.D."/>
            <person name="Holmes S."/>
            <person name="Holt K."/>
            <person name="Howden P.J."/>
            <person name="Hunt A.R."/>
            <person name="Hunt S.E."/>
            <person name="Hunter G."/>
            <person name="Isherwood J."/>
            <person name="James R."/>
            <person name="Johnson C."/>
            <person name="Johnson D."/>
            <person name="Joy A."/>
            <person name="Kay M."/>
            <person name="Kershaw J.K."/>
            <person name="Kibukawa M."/>
            <person name="Kimberley A.M."/>
            <person name="King A."/>
            <person name="Knights A.J."/>
            <person name="Lad H."/>
            <person name="Laird G."/>
            <person name="Lawlor S."/>
            <person name="Leongamornlert D.A."/>
            <person name="Lloyd D.M."/>
            <person name="Loveland J."/>
            <person name="Lovell J."/>
            <person name="Lush M.J."/>
            <person name="Lyne R."/>
            <person name="Martin S."/>
            <person name="Mashreghi-Mohammadi M."/>
            <person name="Matthews L."/>
            <person name="Matthews N.S.W."/>
            <person name="McLaren S."/>
            <person name="Milne S."/>
            <person name="Mistry S."/>
            <person name="Moore M.J.F."/>
            <person name="Nickerson T."/>
            <person name="O'Dell C.N."/>
            <person name="Oliver K."/>
            <person name="Palmeiri A."/>
            <person name="Palmer S.A."/>
            <person name="Parker A."/>
            <person name="Patel D."/>
            <person name="Pearce A.V."/>
            <person name="Peck A.I."/>
            <person name="Pelan S."/>
            <person name="Phelps K."/>
            <person name="Phillimore B.J."/>
            <person name="Plumb R."/>
            <person name="Rajan J."/>
            <person name="Raymond C."/>
            <person name="Rouse G."/>
            <person name="Saenphimmachak C."/>
            <person name="Sehra H.K."/>
            <person name="Sheridan E."/>
            <person name="Shownkeen R."/>
            <person name="Sims S."/>
            <person name="Skuce C.D."/>
            <person name="Smith M."/>
            <person name="Steward C."/>
            <person name="Subramanian S."/>
            <person name="Sycamore N."/>
            <person name="Tracey A."/>
            <person name="Tromans A."/>
            <person name="Van Helmond Z."/>
            <person name="Wall M."/>
            <person name="Wallis J.M."/>
            <person name="White S."/>
            <person name="Whitehead S.L."/>
            <person name="Wilkinson J.E."/>
            <person name="Willey D.L."/>
            <person name="Williams H."/>
            <person name="Wilming L."/>
            <person name="Wray P.W."/>
            <person name="Wu Z."/>
            <person name="Coulson A."/>
            <person name="Vaudin M."/>
            <person name="Sulston J.E."/>
            <person name="Durbin R.M."/>
            <person name="Hubbard T."/>
            <person name="Wooster R."/>
            <person name="Dunham I."/>
            <person name="Carter N.P."/>
            <person name="McVean G."/>
            <person name="Ross M.T."/>
            <person name="Harrow J."/>
            <person name="Olson M.V."/>
            <person name="Beck S."/>
            <person name="Rogers J."/>
            <person name="Bentley D.R."/>
        </authorList>
    </citation>
    <scope>NUCLEOTIDE SEQUENCE [LARGE SCALE GENOMIC DNA]</scope>
</reference>
<reference key="4">
    <citation type="submission" date="2005-09" db="EMBL/GenBank/DDBJ databases">
        <authorList>
            <person name="Mural R.J."/>
            <person name="Istrail S."/>
            <person name="Sutton G.G."/>
            <person name="Florea L."/>
            <person name="Halpern A.L."/>
            <person name="Mobarry C.M."/>
            <person name="Lippert R."/>
            <person name="Walenz B."/>
            <person name="Shatkay H."/>
            <person name="Dew I."/>
            <person name="Miller J.R."/>
            <person name="Flanigan M.J."/>
            <person name="Edwards N.J."/>
            <person name="Bolanos R."/>
            <person name="Fasulo D."/>
            <person name="Halldorsson B.V."/>
            <person name="Hannenhalli S."/>
            <person name="Turner R."/>
            <person name="Yooseph S."/>
            <person name="Lu F."/>
            <person name="Nusskern D.R."/>
            <person name="Shue B.C."/>
            <person name="Zheng X.H."/>
            <person name="Zhong F."/>
            <person name="Delcher A.L."/>
            <person name="Huson D.H."/>
            <person name="Kravitz S.A."/>
            <person name="Mouchard L."/>
            <person name="Reinert K."/>
            <person name="Remington K.A."/>
            <person name="Clark A.G."/>
            <person name="Waterman M.S."/>
            <person name="Eichler E.E."/>
            <person name="Adams M.D."/>
            <person name="Hunkapiller M.W."/>
            <person name="Myers E.W."/>
            <person name="Venter J.C."/>
        </authorList>
    </citation>
    <scope>NUCLEOTIDE SEQUENCE [LARGE SCALE GENOMIC DNA]</scope>
</reference>
<reference key="5">
    <citation type="journal article" date="2004" name="Genome Res.">
        <title>The status, quality, and expansion of the NIH full-length cDNA project: the Mammalian Gene Collection (MGC).</title>
        <authorList>
            <consortium name="The MGC Project Team"/>
        </authorList>
    </citation>
    <scope>NUCLEOTIDE SEQUENCE [LARGE SCALE MRNA]</scope>
    <scope>VARIANT LEU-300</scope>
    <source>
        <tissue>Pancreas</tissue>
    </source>
</reference>
<reference key="6">
    <citation type="journal article" date="2001" name="J. Biol. Chem.">
        <title>ETL, a novel seven-transmembrane receptor that is developmentally regulated in the heart.</title>
        <authorList>
            <person name="Nechiporuk T."/>
            <person name="Urness L.D."/>
            <person name="Keating M.T."/>
        </authorList>
    </citation>
    <scope>NUCLEOTIDE SEQUENCE [MRNA] OF 67-690</scope>
    <scope>VARIANT LEU-300</scope>
    <scope>DEVELOPMENTAL STAGE</scope>
</reference>
<reference key="7">
    <citation type="journal article" date="2005" name="J. Proteome Res.">
        <title>Human plasma N-glycoproteome analysis by immunoaffinity subtraction, hydrazide chemistry, and mass spectrometry.</title>
        <authorList>
            <person name="Liu T."/>
            <person name="Qian W.-J."/>
            <person name="Gritsenko M.A."/>
            <person name="Camp D.G. II"/>
            <person name="Monroe M.E."/>
            <person name="Moore R.J."/>
            <person name="Smith R.D."/>
        </authorList>
    </citation>
    <scope>GLYCOSYLATION [LARGE SCALE ANALYSIS] AT ASN-249</scope>
    <source>
        <tissue>Plasma</tissue>
    </source>
</reference>
<reference key="8">
    <citation type="journal article" date="2013" name="Cancer Cell">
        <title>A core human primary tumor angiogenesis signature identifies the endothelial orphan receptor ELTD1 as a key regulator of angiogenesis.</title>
        <authorList>
            <person name="Masiero M."/>
            <person name="Simoes F.C."/>
            <person name="Han H.D."/>
            <person name="Snell C."/>
            <person name="Peterkin T."/>
            <person name="Bridges E."/>
            <person name="Mangala L.S."/>
            <person name="Wu S.Y."/>
            <person name="Pradeep S."/>
            <person name="Li D."/>
            <person name="Han C."/>
            <person name="Dalton H."/>
            <person name="Lopez-Berestein G."/>
            <person name="Tuynman J.B."/>
            <person name="Mortensen N."/>
            <person name="Li J.L."/>
            <person name="Patient R."/>
            <person name="Sood A.K."/>
            <person name="Banham A.H."/>
            <person name="Harris A.L."/>
            <person name="Buffa F.M."/>
        </authorList>
    </citation>
    <scope>SUBCELLULAR LOCATION</scope>
    <scope>SUBUNIT</scope>
    <scope>GLYCOSYLATION</scope>
    <scope>INDUCTION</scope>
    <scope>FUNCTION</scope>
</reference>
<reference key="9">
    <citation type="journal article" date="2015" name="Pharmacol. Rev.">
        <title>International union of basic and clinical pharmacology. XCIV. Adhesion G protein-coupled receptors.</title>
        <authorList>
            <person name="Hamann J."/>
            <person name="Aust G."/>
            <person name="Arac D."/>
            <person name="Engel F.B."/>
            <person name="Formstone C."/>
            <person name="Fredriksson R."/>
            <person name="Hall R.A."/>
            <person name="Harty B.L."/>
            <person name="Kirchhoff C."/>
            <person name="Knapp B."/>
            <person name="Krishnan A."/>
            <person name="Liebscher I."/>
            <person name="Lin H.H."/>
            <person name="Martinelli D.C."/>
            <person name="Monk K.R."/>
            <person name="Peeters M.C."/>
            <person name="Piao X."/>
            <person name="Promel S."/>
            <person name="Schoneberg T."/>
            <person name="Schwartz T.W."/>
            <person name="Singer K."/>
            <person name="Stacey M."/>
            <person name="Ushkaryov Y.A."/>
            <person name="Vallon M."/>
            <person name="Wolfrum U."/>
            <person name="Wright M.W."/>
            <person name="Xu L."/>
            <person name="Langenhan T."/>
            <person name="Schioth H.B."/>
        </authorList>
    </citation>
    <scope>NOMENCLATURE</scope>
</reference>
<dbReference type="EMBL" id="AB032017">
    <property type="protein sequence ID" value="BAD83584.1"/>
    <property type="molecule type" value="mRNA"/>
</dbReference>
<dbReference type="EMBL" id="AY358360">
    <property type="protein sequence ID" value="AAQ88726.1"/>
    <property type="molecule type" value="mRNA"/>
</dbReference>
<dbReference type="EMBL" id="AC098651">
    <property type="status" value="NOT_ANNOTATED_CDS"/>
    <property type="molecule type" value="Genomic_DNA"/>
</dbReference>
<dbReference type="EMBL" id="AC099674">
    <property type="status" value="NOT_ANNOTATED_CDS"/>
    <property type="molecule type" value="Genomic_DNA"/>
</dbReference>
<dbReference type="EMBL" id="AL596269">
    <property type="status" value="NOT_ANNOTATED_CDS"/>
    <property type="molecule type" value="Genomic_DNA"/>
</dbReference>
<dbReference type="EMBL" id="CH471059">
    <property type="protein sequence ID" value="EAX06345.1"/>
    <property type="molecule type" value="Genomic_DNA"/>
</dbReference>
<dbReference type="EMBL" id="BC025721">
    <property type="protein sequence ID" value="AAH25721.1"/>
    <property type="status" value="ALT_INIT"/>
    <property type="molecule type" value="mRNA"/>
</dbReference>
<dbReference type="EMBL" id="AF192403">
    <property type="protein sequence ID" value="AAG33021.1"/>
    <property type="status" value="ALT_INIT"/>
    <property type="molecule type" value="mRNA"/>
</dbReference>
<dbReference type="CCDS" id="CCDS41352.1"/>
<dbReference type="RefSeq" id="NP_071442.2">
    <property type="nucleotide sequence ID" value="NM_022159.3"/>
</dbReference>
<dbReference type="SMR" id="Q9HBW9"/>
<dbReference type="BioGRID" id="122076">
    <property type="interactions" value="2"/>
</dbReference>
<dbReference type="FunCoup" id="Q9HBW9">
    <property type="interactions" value="319"/>
</dbReference>
<dbReference type="IntAct" id="Q9HBW9">
    <property type="interactions" value="1"/>
</dbReference>
<dbReference type="STRING" id="9606.ENSP00000359778"/>
<dbReference type="ChEMBL" id="CHEMBL4523920"/>
<dbReference type="MEROPS" id="P02.013"/>
<dbReference type="TCDB" id="9.A.14.6.3">
    <property type="family name" value="the g-protein-coupled receptor (gpcr) family"/>
</dbReference>
<dbReference type="GlyConnect" id="1915">
    <property type="glycosylation" value="15 N-Linked glycans (4 sites)"/>
</dbReference>
<dbReference type="GlyCosmos" id="Q9HBW9">
    <property type="glycosylation" value="10 sites, 15 glycans"/>
</dbReference>
<dbReference type="GlyGen" id="Q9HBW9">
    <property type="glycosylation" value="10 sites, 30 N-linked glycans (4 sites)"/>
</dbReference>
<dbReference type="iPTMnet" id="Q9HBW9"/>
<dbReference type="PhosphoSitePlus" id="Q9HBW9"/>
<dbReference type="BioMuta" id="ADGRL4"/>
<dbReference type="DMDM" id="212276505"/>
<dbReference type="MassIVE" id="Q9HBW9"/>
<dbReference type="PaxDb" id="9606-ENSP00000359778"/>
<dbReference type="PeptideAtlas" id="Q9HBW9"/>
<dbReference type="ProteomicsDB" id="81602"/>
<dbReference type="ABCD" id="Q9HBW9">
    <property type="antibodies" value="1 sequenced antibody"/>
</dbReference>
<dbReference type="Antibodypedia" id="9366">
    <property type="antibodies" value="212 antibodies from 30 providers"/>
</dbReference>
<dbReference type="DNASU" id="64123"/>
<dbReference type="Ensembl" id="ENST00000370742.4">
    <property type="protein sequence ID" value="ENSP00000359778.3"/>
    <property type="gene ID" value="ENSG00000162618.15"/>
</dbReference>
<dbReference type="GeneID" id="64123"/>
<dbReference type="KEGG" id="hsa:64123"/>
<dbReference type="MANE-Select" id="ENST00000370742.4">
    <property type="protein sequence ID" value="ENSP00000359778.3"/>
    <property type="RefSeq nucleotide sequence ID" value="NM_022159.4"/>
    <property type="RefSeq protein sequence ID" value="NP_071442.2"/>
</dbReference>
<dbReference type="UCSC" id="uc001diq.5">
    <property type="organism name" value="human"/>
</dbReference>
<dbReference type="AGR" id="HGNC:20822"/>
<dbReference type="CTD" id="64123"/>
<dbReference type="DisGeNET" id="64123"/>
<dbReference type="GeneCards" id="ADGRL4"/>
<dbReference type="HGNC" id="HGNC:20822">
    <property type="gene designation" value="ADGRL4"/>
</dbReference>
<dbReference type="HPA" id="ENSG00000162618">
    <property type="expression patterns" value="Tissue enhanced (adipose)"/>
</dbReference>
<dbReference type="MIM" id="616419">
    <property type="type" value="gene"/>
</dbReference>
<dbReference type="neXtProt" id="NX_Q9HBW9"/>
<dbReference type="OpenTargets" id="ENSG00000162618"/>
<dbReference type="PharmGKB" id="PA134946418"/>
<dbReference type="VEuPathDB" id="HostDB:ENSG00000162618"/>
<dbReference type="eggNOG" id="KOG1217">
    <property type="taxonomic scope" value="Eukaryota"/>
</dbReference>
<dbReference type="eggNOG" id="KOG4193">
    <property type="taxonomic scope" value="Eukaryota"/>
</dbReference>
<dbReference type="GeneTree" id="ENSGT00940000158252"/>
<dbReference type="HOGENOM" id="CLU_002753_3_8_1"/>
<dbReference type="InParanoid" id="Q9HBW9"/>
<dbReference type="OMA" id="PYMNVDG"/>
<dbReference type="OrthoDB" id="8191206at2759"/>
<dbReference type="PAN-GO" id="Q9HBW9">
    <property type="GO annotations" value="3 GO annotations based on evolutionary models"/>
</dbReference>
<dbReference type="PhylomeDB" id="Q9HBW9"/>
<dbReference type="TreeFam" id="TF316380"/>
<dbReference type="PathwayCommons" id="Q9HBW9"/>
<dbReference type="SignaLink" id="Q9HBW9"/>
<dbReference type="BioGRID-ORCS" id="64123">
    <property type="hits" value="10 hits in 1149 CRISPR screens"/>
</dbReference>
<dbReference type="GeneWiki" id="ELTD1"/>
<dbReference type="GenomeRNAi" id="64123"/>
<dbReference type="Pharos" id="Q9HBW9">
    <property type="development level" value="Tbio"/>
</dbReference>
<dbReference type="PRO" id="PR:Q9HBW9"/>
<dbReference type="Proteomes" id="UP000005640">
    <property type="component" value="Chromosome 1"/>
</dbReference>
<dbReference type="RNAct" id="Q9HBW9">
    <property type="molecule type" value="protein"/>
</dbReference>
<dbReference type="Bgee" id="ENSG00000162618">
    <property type="expression patterns" value="Expressed in pericardium and 188 other cell types or tissues"/>
</dbReference>
<dbReference type="ExpressionAtlas" id="Q9HBW9">
    <property type="expression patterns" value="baseline and differential"/>
</dbReference>
<dbReference type="GO" id="GO:0031410">
    <property type="term" value="C:cytoplasmic vesicle"/>
    <property type="evidence" value="ECO:0000250"/>
    <property type="project" value="UniProtKB"/>
</dbReference>
<dbReference type="GO" id="GO:0016020">
    <property type="term" value="C:membrane"/>
    <property type="evidence" value="ECO:0000304"/>
    <property type="project" value="GDB"/>
</dbReference>
<dbReference type="GO" id="GO:0005886">
    <property type="term" value="C:plasma membrane"/>
    <property type="evidence" value="ECO:0000250"/>
    <property type="project" value="UniProtKB"/>
</dbReference>
<dbReference type="GO" id="GO:0005509">
    <property type="term" value="F:calcium ion binding"/>
    <property type="evidence" value="ECO:0007669"/>
    <property type="project" value="InterPro"/>
</dbReference>
<dbReference type="GO" id="GO:0004930">
    <property type="term" value="F:G protein-coupled receptor activity"/>
    <property type="evidence" value="ECO:0000318"/>
    <property type="project" value="GO_Central"/>
</dbReference>
<dbReference type="GO" id="GO:0007189">
    <property type="term" value="P:adenylate cyclase-activating G protein-coupled receptor signaling pathway"/>
    <property type="evidence" value="ECO:0000318"/>
    <property type="project" value="GO_Central"/>
</dbReference>
<dbReference type="GO" id="GO:0007166">
    <property type="term" value="P:cell surface receptor signaling pathway"/>
    <property type="evidence" value="ECO:0007669"/>
    <property type="project" value="InterPro"/>
</dbReference>
<dbReference type="GO" id="GO:0007186">
    <property type="term" value="P:G protein-coupled receptor signaling pathway"/>
    <property type="evidence" value="ECO:0000304"/>
    <property type="project" value="GDB"/>
</dbReference>
<dbReference type="CDD" id="cd15437">
    <property type="entry name" value="7tmB2_ETL"/>
    <property type="match status" value="1"/>
</dbReference>
<dbReference type="CDD" id="cd00054">
    <property type="entry name" value="EGF_CA"/>
    <property type="match status" value="1"/>
</dbReference>
<dbReference type="FunFam" id="1.20.1070.10:FF:000064">
    <property type="entry name" value="adhesion G protein-coupled receptor L4 isoform X1"/>
    <property type="match status" value="1"/>
</dbReference>
<dbReference type="FunFam" id="2.10.25.10:FF:000466">
    <property type="entry name" value="adhesion G protein-coupled receptor L4 isoform X1"/>
    <property type="match status" value="1"/>
</dbReference>
<dbReference type="FunFam" id="2.60.220.50:FF:000010">
    <property type="entry name" value="adhesion G protein-coupled receptor L4 isoform X1"/>
    <property type="match status" value="1"/>
</dbReference>
<dbReference type="FunFam" id="2.10.25.10:FF:000526">
    <property type="entry name" value="Dumpy, isoform J"/>
    <property type="match status" value="1"/>
</dbReference>
<dbReference type="Gene3D" id="2.60.220.50">
    <property type="match status" value="1"/>
</dbReference>
<dbReference type="Gene3D" id="2.10.25.10">
    <property type="entry name" value="Laminin"/>
    <property type="match status" value="1"/>
</dbReference>
<dbReference type="Gene3D" id="1.20.1070.10">
    <property type="entry name" value="Rhodopsin 7-helix transmembrane proteins"/>
    <property type="match status" value="1"/>
</dbReference>
<dbReference type="InterPro" id="IPR001881">
    <property type="entry name" value="EGF-like_Ca-bd_dom"/>
</dbReference>
<dbReference type="InterPro" id="IPR000742">
    <property type="entry name" value="EGF-like_dom"/>
</dbReference>
<dbReference type="InterPro" id="IPR000152">
    <property type="entry name" value="EGF-type_Asp/Asn_hydroxyl_site"/>
</dbReference>
<dbReference type="InterPro" id="IPR018097">
    <property type="entry name" value="EGF_Ca-bd_CS"/>
</dbReference>
<dbReference type="InterPro" id="IPR057244">
    <property type="entry name" value="GAIN_B"/>
</dbReference>
<dbReference type="InterPro" id="IPR032471">
    <property type="entry name" value="GAIN_dom_N"/>
</dbReference>
<dbReference type="InterPro" id="IPR046338">
    <property type="entry name" value="GAIN_dom_sf"/>
</dbReference>
<dbReference type="InterPro" id="IPR017981">
    <property type="entry name" value="GPCR_2-like_7TM"/>
</dbReference>
<dbReference type="InterPro" id="IPR000832">
    <property type="entry name" value="GPCR_2_secretin-like"/>
</dbReference>
<dbReference type="InterPro" id="IPR017983">
    <property type="entry name" value="GPCR_2_secretin-like_CS"/>
</dbReference>
<dbReference type="InterPro" id="IPR000203">
    <property type="entry name" value="GPS"/>
</dbReference>
<dbReference type="InterPro" id="IPR049883">
    <property type="entry name" value="NOTCH1_EGF-like"/>
</dbReference>
<dbReference type="PANTHER" id="PTHR12011:SF59">
    <property type="entry name" value="ADHESION G PROTEIN-COUPLED RECEPTOR L4"/>
    <property type="match status" value="1"/>
</dbReference>
<dbReference type="PANTHER" id="PTHR12011">
    <property type="entry name" value="ADHESION G-PROTEIN COUPLED RECEPTOR"/>
    <property type="match status" value="1"/>
</dbReference>
<dbReference type="Pfam" id="PF00002">
    <property type="entry name" value="7tm_2"/>
    <property type="match status" value="1"/>
</dbReference>
<dbReference type="Pfam" id="PF07645">
    <property type="entry name" value="EGF_CA"/>
    <property type="match status" value="1"/>
</dbReference>
<dbReference type="Pfam" id="PF16489">
    <property type="entry name" value="GAIN"/>
    <property type="match status" value="1"/>
</dbReference>
<dbReference type="Pfam" id="PF01825">
    <property type="entry name" value="GPS"/>
    <property type="match status" value="1"/>
</dbReference>
<dbReference type="PRINTS" id="PR00249">
    <property type="entry name" value="GPCRSECRETIN"/>
</dbReference>
<dbReference type="SMART" id="SM00181">
    <property type="entry name" value="EGF"/>
    <property type="match status" value="2"/>
</dbReference>
<dbReference type="SMART" id="SM00179">
    <property type="entry name" value="EGF_CA"/>
    <property type="match status" value="1"/>
</dbReference>
<dbReference type="SMART" id="SM00303">
    <property type="entry name" value="GPS"/>
    <property type="match status" value="1"/>
</dbReference>
<dbReference type="SUPFAM" id="SSF57196">
    <property type="entry name" value="EGF/Laminin"/>
    <property type="match status" value="1"/>
</dbReference>
<dbReference type="PROSITE" id="PS00010">
    <property type="entry name" value="ASX_HYDROXYL"/>
    <property type="match status" value="1"/>
</dbReference>
<dbReference type="PROSITE" id="PS00018">
    <property type="entry name" value="EF_HAND_1"/>
    <property type="match status" value="1"/>
</dbReference>
<dbReference type="PROSITE" id="PS01186">
    <property type="entry name" value="EGF_2"/>
    <property type="match status" value="1"/>
</dbReference>
<dbReference type="PROSITE" id="PS50026">
    <property type="entry name" value="EGF_3"/>
    <property type="match status" value="2"/>
</dbReference>
<dbReference type="PROSITE" id="PS01187">
    <property type="entry name" value="EGF_CA"/>
    <property type="match status" value="1"/>
</dbReference>
<dbReference type="PROSITE" id="PS00650">
    <property type="entry name" value="G_PROTEIN_RECEP_F2_2"/>
    <property type="match status" value="1"/>
</dbReference>
<dbReference type="PROSITE" id="PS50261">
    <property type="entry name" value="G_PROTEIN_RECEP_F2_4"/>
    <property type="match status" value="1"/>
</dbReference>
<dbReference type="PROSITE" id="PS50221">
    <property type="entry name" value="GAIN_B"/>
    <property type="match status" value="1"/>
</dbReference>
<organism>
    <name type="scientific">Homo sapiens</name>
    <name type="common">Human</name>
    <dbReference type="NCBI Taxonomy" id="9606"/>
    <lineage>
        <taxon>Eukaryota</taxon>
        <taxon>Metazoa</taxon>
        <taxon>Chordata</taxon>
        <taxon>Craniata</taxon>
        <taxon>Vertebrata</taxon>
        <taxon>Euteleostomi</taxon>
        <taxon>Mammalia</taxon>
        <taxon>Eutheria</taxon>
        <taxon>Euarchontoglires</taxon>
        <taxon>Primates</taxon>
        <taxon>Haplorrhini</taxon>
        <taxon>Catarrhini</taxon>
        <taxon>Hominidae</taxon>
        <taxon>Homo</taxon>
    </lineage>
</organism>
<gene>
    <name evidence="11" type="primary">ADGRL4</name>
    <name type="synonym">ELTD1</name>
    <name type="synonym">ETL</name>
    <name type="ORF">UNQ202/PRO228</name>
</gene>
<protein>
    <recommendedName>
        <fullName evidence="11">Adhesion G protein-coupled receptor L4</fullName>
    </recommendedName>
    <alternativeName>
        <fullName>EGF, latrophilin and seven transmembrane domain-containing protein 1</fullName>
    </alternativeName>
    <alternativeName>
        <fullName>EGF-TM7-latrophilin-related protein</fullName>
        <shortName>ETL protein</shortName>
    </alternativeName>
</protein>
<feature type="signal peptide" evidence="2">
    <location>
        <begin position="1"/>
        <end position="19"/>
    </location>
</feature>
<feature type="chain" id="PRO_0000012870" description="Adhesion G protein-coupled receptor L4">
    <location>
        <begin position="20"/>
        <end position="690"/>
    </location>
</feature>
<feature type="topological domain" description="Extracellular" evidence="12">
    <location>
        <begin position="20"/>
        <end position="432"/>
    </location>
</feature>
<feature type="transmembrane region" description="Helical; Name=1" evidence="2">
    <location>
        <begin position="433"/>
        <end position="453"/>
    </location>
</feature>
<feature type="topological domain" description="Cytoplasmic" evidence="12">
    <location>
        <begin position="454"/>
        <end position="460"/>
    </location>
</feature>
<feature type="transmembrane region" description="Helical; Name=2" evidence="2">
    <location>
        <begin position="461"/>
        <end position="481"/>
    </location>
</feature>
<feature type="topological domain" description="Extracellular" evidence="12">
    <location>
        <begin position="482"/>
        <end position="499"/>
    </location>
</feature>
<feature type="transmembrane region" description="Helical; Name=3" evidence="2">
    <location>
        <begin position="500"/>
        <end position="520"/>
    </location>
</feature>
<feature type="topological domain" description="Cytoplasmic" evidence="12">
    <location>
        <begin position="521"/>
        <end position="532"/>
    </location>
</feature>
<feature type="transmembrane region" description="Helical; Name=4" evidence="2">
    <location>
        <begin position="533"/>
        <end position="553"/>
    </location>
</feature>
<feature type="topological domain" description="Extracellular" evidence="12">
    <location>
        <begin position="554"/>
        <end position="573"/>
    </location>
</feature>
<feature type="transmembrane region" description="Helical; Name=5" evidence="2">
    <location>
        <begin position="574"/>
        <end position="594"/>
    </location>
</feature>
<feature type="topological domain" description="Cytoplasmic" evidence="12">
    <location>
        <begin position="595"/>
        <end position="618"/>
    </location>
</feature>
<feature type="transmembrane region" description="Helical; Name=6" evidence="2">
    <location>
        <begin position="619"/>
        <end position="639"/>
    </location>
</feature>
<feature type="topological domain" description="Extracellular" evidence="12">
    <location>
        <begin position="640"/>
        <end position="646"/>
    </location>
</feature>
<feature type="transmembrane region" description="Helical; Name=7" evidence="2">
    <location>
        <begin position="647"/>
        <end position="667"/>
    </location>
</feature>
<feature type="topological domain" description="Cytoplasmic" evidence="12">
    <location>
        <begin position="668"/>
        <end position="690"/>
    </location>
</feature>
<feature type="domain" description="EGF-like 1" evidence="3">
    <location>
        <begin position="20"/>
        <end position="57"/>
    </location>
</feature>
<feature type="domain" description="EGF-like 2; calcium-binding" evidence="3">
    <location>
        <begin position="58"/>
        <end position="108"/>
    </location>
</feature>
<feature type="domain" description="GAIN-B" evidence="4">
    <location>
        <begin position="244"/>
        <end position="419"/>
    </location>
</feature>
<feature type="region of interest" description="GPS" evidence="4">
    <location>
        <begin position="370"/>
        <end position="419"/>
    </location>
</feature>
<feature type="site" description="Cleavage; by autolysis" evidence="4">
    <location>
        <begin position="406"/>
        <end position="407"/>
    </location>
</feature>
<feature type="glycosylation site" description="N-linked (GlcNAc...) asparagine" evidence="2">
    <location>
        <position position="21"/>
    </location>
</feature>
<feature type="glycosylation site" description="N-linked (GlcNAc...) asparagine" evidence="2">
    <location>
        <position position="64"/>
    </location>
</feature>
<feature type="glycosylation site" description="N-linked (GlcNAc...) asparagine" evidence="2">
    <location>
        <position position="74"/>
    </location>
</feature>
<feature type="glycosylation site" description="N-linked (GlcNAc...) asparagine" evidence="2">
    <location>
        <position position="127"/>
    </location>
</feature>
<feature type="glycosylation site" description="N-linked (GlcNAc...) asparagine" evidence="2">
    <location>
        <position position="177"/>
    </location>
</feature>
<feature type="glycosylation site" description="N-linked (GlcNAc...) asparagine" evidence="2">
    <location>
        <position position="188"/>
    </location>
</feature>
<feature type="glycosylation site" description="N-linked (GlcNAc...) asparagine" evidence="8">
    <location>
        <position position="249"/>
    </location>
</feature>
<feature type="glycosylation site" description="N-linked (GlcNAc...) asparagine" evidence="2">
    <location>
        <position position="381"/>
    </location>
</feature>
<feature type="glycosylation site" description="N-linked (GlcNAc...) asparagine" evidence="2">
    <location>
        <position position="395"/>
    </location>
</feature>
<feature type="disulfide bond" evidence="3">
    <location>
        <begin position="22"/>
        <end position="33"/>
    </location>
</feature>
<feature type="disulfide bond" evidence="3">
    <location>
        <begin position="27"/>
        <end position="42"/>
    </location>
</feature>
<feature type="disulfide bond" evidence="3">
    <location>
        <begin position="44"/>
        <end position="56"/>
    </location>
</feature>
<feature type="disulfide bond" evidence="3">
    <location>
        <begin position="62"/>
        <end position="75"/>
    </location>
</feature>
<feature type="disulfide bond" evidence="3">
    <location>
        <begin position="69"/>
        <end position="84"/>
    </location>
</feature>
<feature type="disulfide bond" evidence="3">
    <location>
        <begin position="86"/>
        <end position="107"/>
    </location>
</feature>
<feature type="disulfide bond" evidence="4">
    <location>
        <begin position="370"/>
        <end position="401"/>
    </location>
</feature>
<feature type="disulfide bond" evidence="4">
    <location>
        <begin position="389"/>
        <end position="403"/>
    </location>
</feature>
<feature type="sequence variant" id="VAR_047072" description="In dbSNP:rs12754818." evidence="5 6 7">
    <original>V</original>
    <variation>L</variation>
    <location>
        <position position="300"/>
    </location>
</feature>
<feature type="sequence variant" id="VAR_047073" description="In dbSNP:rs1968956.">
    <original>H</original>
    <variation>Q</variation>
    <location>
        <position position="599"/>
    </location>
</feature>
<feature type="sequence variant" id="VAR_047074" description="In dbSNP:rs2275902." evidence="10">
    <original>A</original>
    <variation>G</variation>
    <location>
        <position position="620"/>
    </location>
</feature>
<accession>Q9HBW9</accession>
<accession>B1AR71</accession>
<accession>Q5KU34</accession>
<keyword id="KW-0106">Calcium</keyword>
<keyword id="KW-1003">Cell membrane</keyword>
<keyword id="KW-1015">Disulfide bond</keyword>
<keyword id="KW-0245">EGF-like domain</keyword>
<keyword id="KW-0297">G-protein coupled receptor</keyword>
<keyword id="KW-0325">Glycoprotein</keyword>
<keyword id="KW-0472">Membrane</keyword>
<keyword id="KW-1267">Proteomics identification</keyword>
<keyword id="KW-0675">Receptor</keyword>
<keyword id="KW-1185">Reference proteome</keyword>
<keyword id="KW-0677">Repeat</keyword>
<keyword id="KW-0732">Signal</keyword>
<keyword id="KW-0807">Transducer</keyword>
<keyword id="KW-0812">Transmembrane</keyword>
<keyword id="KW-1133">Transmembrane helix</keyword>